<sequence>MSGEASTSRRKRQRVPSSVESVENGGGDAVARSGTLFELDLLDCPICCHALTSPIFQCDNGHIACSSCCTKLRNKCPSCALPIGNFRSRIMERVVEAVMVTCPNVKHGCTEKFSYGKELIHEKDCRFALCYCPAPNCNYSGVYKDLYSHFYVNHYDTWNQIGCGNFAGAWLRISEKILVLQYGQGPLIAVQCFKETQGMYVTVNCIAPCAPGVGELSFELSYKMPMGGNSTMMFKSEEMNRIQKVSFQTPEKDFMLVPYYFLGDFSTLKMEICIRKLKKDEEEADEDEESEEEEDDDDDDDDDDEEEDADEEE</sequence>
<accession>Q9C6H3</accession>
<dbReference type="EC" id="2.3.2.27"/>
<dbReference type="EMBL" id="AC079285">
    <property type="protein sequence ID" value="AAG51178.1"/>
    <property type="molecule type" value="Genomic_DNA"/>
</dbReference>
<dbReference type="EMBL" id="CP002684">
    <property type="protein sequence ID" value="AEE34537.1"/>
    <property type="molecule type" value="Genomic_DNA"/>
</dbReference>
<dbReference type="PIR" id="B96692">
    <property type="entry name" value="B96692"/>
</dbReference>
<dbReference type="RefSeq" id="NP_176835.1">
    <property type="nucleotide sequence ID" value="NM_105333.3"/>
</dbReference>
<dbReference type="FunCoup" id="Q9C6H3">
    <property type="interactions" value="10"/>
</dbReference>
<dbReference type="STRING" id="3702.Q9C6H3"/>
<dbReference type="PaxDb" id="3702-AT1G66620.1"/>
<dbReference type="ProteomicsDB" id="234524"/>
<dbReference type="EnsemblPlants" id="AT1G66620.1">
    <property type="protein sequence ID" value="AT1G66620.1"/>
    <property type="gene ID" value="AT1G66620"/>
</dbReference>
<dbReference type="GeneID" id="842980"/>
<dbReference type="Gramene" id="AT1G66620.1">
    <property type="protein sequence ID" value="AT1G66620.1"/>
    <property type="gene ID" value="AT1G66620"/>
</dbReference>
<dbReference type="KEGG" id="ath:AT1G66620"/>
<dbReference type="Araport" id="AT1G66620"/>
<dbReference type="TAIR" id="AT1G66620"/>
<dbReference type="eggNOG" id="KOG3002">
    <property type="taxonomic scope" value="Eukaryota"/>
</dbReference>
<dbReference type="HOGENOM" id="CLU_040603_2_2_1"/>
<dbReference type="InParanoid" id="Q9C6H3"/>
<dbReference type="OMA" id="PDSGCGF"/>
<dbReference type="PhylomeDB" id="Q9C6H3"/>
<dbReference type="UniPathway" id="UPA00143"/>
<dbReference type="PRO" id="PR:Q9C6H3"/>
<dbReference type="Proteomes" id="UP000006548">
    <property type="component" value="Chromosome 1"/>
</dbReference>
<dbReference type="ExpressionAtlas" id="Q9C6H3">
    <property type="expression patterns" value="baseline and differential"/>
</dbReference>
<dbReference type="GO" id="GO:0016740">
    <property type="term" value="F:transferase activity"/>
    <property type="evidence" value="ECO:0007669"/>
    <property type="project" value="UniProtKB-KW"/>
</dbReference>
<dbReference type="GO" id="GO:0008270">
    <property type="term" value="F:zinc ion binding"/>
    <property type="evidence" value="ECO:0007669"/>
    <property type="project" value="UniProtKB-KW"/>
</dbReference>
<dbReference type="GO" id="GO:0016567">
    <property type="term" value="P:protein ubiquitination"/>
    <property type="evidence" value="ECO:0007669"/>
    <property type="project" value="UniProtKB-UniPathway"/>
</dbReference>
<dbReference type="CDD" id="cd16571">
    <property type="entry name" value="RING-HC_SIAHs"/>
    <property type="match status" value="1"/>
</dbReference>
<dbReference type="Gene3D" id="3.30.40.10">
    <property type="entry name" value="Zinc/RING finger domain, C3HC4 (zinc finger)"/>
    <property type="match status" value="1"/>
</dbReference>
<dbReference type="InterPro" id="IPR049548">
    <property type="entry name" value="Sina-like_RING"/>
</dbReference>
<dbReference type="InterPro" id="IPR044286">
    <property type="entry name" value="SINL_plant"/>
</dbReference>
<dbReference type="InterPro" id="IPR001841">
    <property type="entry name" value="Znf_RING"/>
</dbReference>
<dbReference type="InterPro" id="IPR013083">
    <property type="entry name" value="Znf_RING/FYVE/PHD"/>
</dbReference>
<dbReference type="InterPro" id="IPR013010">
    <property type="entry name" value="Znf_SIAH"/>
</dbReference>
<dbReference type="PANTHER" id="PTHR46632:SF11">
    <property type="entry name" value="E3 UBIQUITIN-PROTEIN LIGASE SINA-LIKE 1-RELATED"/>
    <property type="match status" value="1"/>
</dbReference>
<dbReference type="PANTHER" id="PTHR46632">
    <property type="entry name" value="E3 UBIQUITIN-PROTEIN LIGASE SINA-LIKE 4"/>
    <property type="match status" value="1"/>
</dbReference>
<dbReference type="Pfam" id="PF21362">
    <property type="entry name" value="Sina_RING"/>
    <property type="match status" value="1"/>
</dbReference>
<dbReference type="Pfam" id="PF21361">
    <property type="entry name" value="Sina_ZnF"/>
    <property type="match status" value="1"/>
</dbReference>
<dbReference type="SUPFAM" id="SSF57850">
    <property type="entry name" value="RING/U-box"/>
    <property type="match status" value="1"/>
</dbReference>
<dbReference type="SUPFAM" id="SSF49599">
    <property type="entry name" value="TRAF domain-like"/>
    <property type="match status" value="1"/>
</dbReference>
<dbReference type="PROSITE" id="PS50089">
    <property type="entry name" value="ZF_RING_2"/>
    <property type="match status" value="1"/>
</dbReference>
<dbReference type="PROSITE" id="PS51081">
    <property type="entry name" value="ZF_SIAH"/>
    <property type="match status" value="1"/>
</dbReference>
<keyword id="KW-0479">Metal-binding</keyword>
<keyword id="KW-1185">Reference proteome</keyword>
<keyword id="KW-0808">Transferase</keyword>
<keyword id="KW-0833">Ubl conjugation pathway</keyword>
<keyword id="KW-0862">Zinc</keyword>
<keyword id="KW-0863">Zinc-finger</keyword>
<comment type="function">
    <text evidence="1">E3 ubiquitin-protein ligase that mediates ubiquitination and subsequent proteasomal degradation of target proteins. E3 ubiquitin ligases accept ubiquitin from an E2 ubiquitin-conjugating enzyme in the form of a thioester and then directly transfers the ubiquitin to targeted substrates. It probably triggers the ubiquitin-mediated degradation of different substrates.</text>
</comment>
<comment type="catalytic activity">
    <reaction>
        <text>S-ubiquitinyl-[E2 ubiquitin-conjugating enzyme]-L-cysteine + [acceptor protein]-L-lysine = [E2 ubiquitin-conjugating enzyme]-L-cysteine + N(6)-ubiquitinyl-[acceptor protein]-L-lysine.</text>
        <dbReference type="EC" id="2.3.2.27"/>
    </reaction>
</comment>
<comment type="pathway">
    <text>Protein modification; protein ubiquitination.</text>
</comment>
<comment type="domain">
    <text evidence="1">The RING-type zinc finger domain is essential for ubiquitin ligase activity.</text>
</comment>
<comment type="domain">
    <text evidence="1">The SBD domain (substrate-binding domain) mediates the homodimerization and the interaction with substrate proteins. It is related to the TRAF family.</text>
</comment>
<comment type="similarity">
    <text evidence="5">Belongs to the SINA (Seven in absentia) family.</text>
</comment>
<organism>
    <name type="scientific">Arabidopsis thaliana</name>
    <name type="common">Mouse-ear cress</name>
    <dbReference type="NCBI Taxonomy" id="3702"/>
    <lineage>
        <taxon>Eukaryota</taxon>
        <taxon>Viridiplantae</taxon>
        <taxon>Streptophyta</taxon>
        <taxon>Embryophyta</taxon>
        <taxon>Tracheophyta</taxon>
        <taxon>Spermatophyta</taxon>
        <taxon>Magnoliopsida</taxon>
        <taxon>eudicotyledons</taxon>
        <taxon>Gunneridae</taxon>
        <taxon>Pentapetalae</taxon>
        <taxon>rosids</taxon>
        <taxon>malvids</taxon>
        <taxon>Brassicales</taxon>
        <taxon>Brassicaceae</taxon>
        <taxon>Camelineae</taxon>
        <taxon>Arabidopsis</taxon>
    </lineage>
</organism>
<gene>
    <name type="ordered locus">At1g66620</name>
    <name type="ORF">T12I7.7</name>
</gene>
<name>SINL2_ARATH</name>
<proteinExistence type="evidence at transcript level"/>
<feature type="chain" id="PRO_0000299191" description="E3 ubiquitin-protein ligase SINA-like 2">
    <location>
        <begin position="1"/>
        <end position="313"/>
    </location>
</feature>
<feature type="zinc finger region" description="RING-type" evidence="2">
    <location>
        <begin position="44"/>
        <end position="80"/>
    </location>
</feature>
<feature type="zinc finger region" description="SIAH-type" evidence="3">
    <location>
        <begin position="97"/>
        <end position="155"/>
    </location>
</feature>
<feature type="region of interest" description="Disordered" evidence="4">
    <location>
        <begin position="1"/>
        <end position="26"/>
    </location>
</feature>
<feature type="region of interest" description="SBD" evidence="1">
    <location>
        <begin position="94"/>
        <end position="277"/>
    </location>
</feature>
<feature type="region of interest" description="Disordered" evidence="4">
    <location>
        <begin position="278"/>
        <end position="313"/>
    </location>
</feature>
<feature type="compositionally biased region" description="Acidic residues" evidence="4">
    <location>
        <begin position="282"/>
        <end position="313"/>
    </location>
</feature>
<feature type="binding site" evidence="1">
    <location>
        <position position="102"/>
    </location>
    <ligand>
        <name>Zn(2+)</name>
        <dbReference type="ChEBI" id="CHEBI:29105"/>
        <label>1</label>
    </ligand>
</feature>
<feature type="binding site" evidence="1">
    <location>
        <position position="109"/>
    </location>
    <ligand>
        <name>Zn(2+)</name>
        <dbReference type="ChEBI" id="CHEBI:29105"/>
        <label>1</label>
    </ligand>
</feature>
<feature type="binding site" evidence="1">
    <location>
        <position position="121"/>
    </location>
    <ligand>
        <name>Zn(2+)</name>
        <dbReference type="ChEBI" id="CHEBI:29105"/>
        <label>1</label>
    </ligand>
</feature>
<feature type="binding site" evidence="1">
    <location>
        <position position="125"/>
    </location>
    <ligand>
        <name>Zn(2+)</name>
        <dbReference type="ChEBI" id="CHEBI:29105"/>
        <label>1</label>
    </ligand>
</feature>
<feature type="binding site" evidence="1">
    <location>
        <position position="132"/>
    </location>
    <ligand>
        <name>Zn(2+)</name>
        <dbReference type="ChEBI" id="CHEBI:29105"/>
        <label>2</label>
    </ligand>
</feature>
<feature type="binding site" evidence="1">
    <location>
        <position position="137"/>
    </location>
    <ligand>
        <name>Zn(2+)</name>
        <dbReference type="ChEBI" id="CHEBI:29105"/>
        <label>2</label>
    </ligand>
</feature>
<feature type="binding site" evidence="1">
    <location>
        <position position="149"/>
    </location>
    <ligand>
        <name>Zn(2+)</name>
        <dbReference type="ChEBI" id="CHEBI:29105"/>
        <label>2</label>
    </ligand>
</feature>
<feature type="binding site" evidence="1">
    <location>
        <position position="154"/>
    </location>
    <ligand>
        <name>Zn(2+)</name>
        <dbReference type="ChEBI" id="CHEBI:29105"/>
        <label>2</label>
    </ligand>
</feature>
<protein>
    <recommendedName>
        <fullName>E3 ubiquitin-protein ligase SINA-like 2</fullName>
        <ecNumber>2.3.2.27</ecNumber>
    </recommendedName>
    <alternativeName>
        <fullName evidence="5">RING-type E3 ubiquitin transferase SINA-like 2</fullName>
    </alternativeName>
    <alternativeName>
        <fullName>Seven in absentia-like protein 2</fullName>
    </alternativeName>
</protein>
<evidence type="ECO:0000250" key="1"/>
<evidence type="ECO:0000255" key="2">
    <source>
        <dbReference type="PROSITE-ProRule" id="PRU00175"/>
    </source>
</evidence>
<evidence type="ECO:0000255" key="3">
    <source>
        <dbReference type="PROSITE-ProRule" id="PRU00455"/>
    </source>
</evidence>
<evidence type="ECO:0000256" key="4">
    <source>
        <dbReference type="SAM" id="MobiDB-lite"/>
    </source>
</evidence>
<evidence type="ECO:0000305" key="5"/>
<reference key="1">
    <citation type="journal article" date="2000" name="Nature">
        <title>Sequence and analysis of chromosome 1 of the plant Arabidopsis thaliana.</title>
        <authorList>
            <person name="Theologis A."/>
            <person name="Ecker J.R."/>
            <person name="Palm C.J."/>
            <person name="Federspiel N.A."/>
            <person name="Kaul S."/>
            <person name="White O."/>
            <person name="Alonso J."/>
            <person name="Altafi H."/>
            <person name="Araujo R."/>
            <person name="Bowman C.L."/>
            <person name="Brooks S.Y."/>
            <person name="Buehler E."/>
            <person name="Chan A."/>
            <person name="Chao Q."/>
            <person name="Chen H."/>
            <person name="Cheuk R.F."/>
            <person name="Chin C.W."/>
            <person name="Chung M.K."/>
            <person name="Conn L."/>
            <person name="Conway A.B."/>
            <person name="Conway A.R."/>
            <person name="Creasy T.H."/>
            <person name="Dewar K."/>
            <person name="Dunn P."/>
            <person name="Etgu P."/>
            <person name="Feldblyum T.V."/>
            <person name="Feng J.-D."/>
            <person name="Fong B."/>
            <person name="Fujii C.Y."/>
            <person name="Gill J.E."/>
            <person name="Goldsmith A.D."/>
            <person name="Haas B."/>
            <person name="Hansen N.F."/>
            <person name="Hughes B."/>
            <person name="Huizar L."/>
            <person name="Hunter J.L."/>
            <person name="Jenkins J."/>
            <person name="Johnson-Hopson C."/>
            <person name="Khan S."/>
            <person name="Khaykin E."/>
            <person name="Kim C.J."/>
            <person name="Koo H.L."/>
            <person name="Kremenetskaia I."/>
            <person name="Kurtz D.B."/>
            <person name="Kwan A."/>
            <person name="Lam B."/>
            <person name="Langin-Hooper S."/>
            <person name="Lee A."/>
            <person name="Lee J.M."/>
            <person name="Lenz C.A."/>
            <person name="Li J.H."/>
            <person name="Li Y.-P."/>
            <person name="Lin X."/>
            <person name="Liu S.X."/>
            <person name="Liu Z.A."/>
            <person name="Luros J.S."/>
            <person name="Maiti R."/>
            <person name="Marziali A."/>
            <person name="Militscher J."/>
            <person name="Miranda M."/>
            <person name="Nguyen M."/>
            <person name="Nierman W.C."/>
            <person name="Osborne B.I."/>
            <person name="Pai G."/>
            <person name="Peterson J."/>
            <person name="Pham P.K."/>
            <person name="Rizzo M."/>
            <person name="Rooney T."/>
            <person name="Rowley D."/>
            <person name="Sakano H."/>
            <person name="Salzberg S.L."/>
            <person name="Schwartz J.R."/>
            <person name="Shinn P."/>
            <person name="Southwick A.M."/>
            <person name="Sun H."/>
            <person name="Tallon L.J."/>
            <person name="Tambunga G."/>
            <person name="Toriumi M.J."/>
            <person name="Town C.D."/>
            <person name="Utterback T."/>
            <person name="Van Aken S."/>
            <person name="Vaysberg M."/>
            <person name="Vysotskaia V.S."/>
            <person name="Walker M."/>
            <person name="Wu D."/>
            <person name="Yu G."/>
            <person name="Fraser C.M."/>
            <person name="Venter J.C."/>
            <person name="Davis R.W."/>
        </authorList>
    </citation>
    <scope>NUCLEOTIDE SEQUENCE [LARGE SCALE GENOMIC DNA]</scope>
    <source>
        <strain>cv. Columbia</strain>
    </source>
</reference>
<reference key="2">
    <citation type="journal article" date="2017" name="Plant J.">
        <title>Araport11: a complete reannotation of the Arabidopsis thaliana reference genome.</title>
        <authorList>
            <person name="Cheng C.Y."/>
            <person name="Krishnakumar V."/>
            <person name="Chan A.P."/>
            <person name="Thibaud-Nissen F."/>
            <person name="Schobel S."/>
            <person name="Town C.D."/>
        </authorList>
    </citation>
    <scope>GENOME REANNOTATION</scope>
    <source>
        <strain>cv. Columbia</strain>
    </source>
</reference>